<protein>
    <recommendedName>
        <fullName evidence="1">Phosphoglucosamine mutase</fullName>
        <ecNumber evidence="1">5.4.2.10</ecNumber>
    </recommendedName>
</protein>
<dbReference type="EC" id="5.4.2.10" evidence="1"/>
<dbReference type="EMBL" id="CP000921">
    <property type="protein sequence ID" value="ACO22498.1"/>
    <property type="molecule type" value="Genomic_DNA"/>
</dbReference>
<dbReference type="RefSeq" id="WP_000521410.1">
    <property type="nucleotide sequence ID" value="NC_012469.1"/>
</dbReference>
<dbReference type="SMR" id="C1CSI0"/>
<dbReference type="KEGG" id="snt:SPT_1500"/>
<dbReference type="HOGENOM" id="CLU_016950_7_0_9"/>
<dbReference type="GO" id="GO:0005829">
    <property type="term" value="C:cytosol"/>
    <property type="evidence" value="ECO:0007669"/>
    <property type="project" value="TreeGrafter"/>
</dbReference>
<dbReference type="GO" id="GO:0000287">
    <property type="term" value="F:magnesium ion binding"/>
    <property type="evidence" value="ECO:0007669"/>
    <property type="project" value="UniProtKB-UniRule"/>
</dbReference>
<dbReference type="GO" id="GO:0008966">
    <property type="term" value="F:phosphoglucosamine mutase activity"/>
    <property type="evidence" value="ECO:0007669"/>
    <property type="project" value="UniProtKB-UniRule"/>
</dbReference>
<dbReference type="GO" id="GO:0004615">
    <property type="term" value="F:phosphomannomutase activity"/>
    <property type="evidence" value="ECO:0007669"/>
    <property type="project" value="TreeGrafter"/>
</dbReference>
<dbReference type="GO" id="GO:0005975">
    <property type="term" value="P:carbohydrate metabolic process"/>
    <property type="evidence" value="ECO:0007669"/>
    <property type="project" value="InterPro"/>
</dbReference>
<dbReference type="GO" id="GO:0009252">
    <property type="term" value="P:peptidoglycan biosynthetic process"/>
    <property type="evidence" value="ECO:0007669"/>
    <property type="project" value="TreeGrafter"/>
</dbReference>
<dbReference type="GO" id="GO:0006048">
    <property type="term" value="P:UDP-N-acetylglucosamine biosynthetic process"/>
    <property type="evidence" value="ECO:0007669"/>
    <property type="project" value="TreeGrafter"/>
</dbReference>
<dbReference type="CDD" id="cd05802">
    <property type="entry name" value="GlmM"/>
    <property type="match status" value="1"/>
</dbReference>
<dbReference type="FunFam" id="3.30.310.50:FF:000001">
    <property type="entry name" value="Phosphoglucosamine mutase"/>
    <property type="match status" value="1"/>
</dbReference>
<dbReference type="FunFam" id="3.40.120.10:FF:000001">
    <property type="entry name" value="Phosphoglucosamine mutase"/>
    <property type="match status" value="1"/>
</dbReference>
<dbReference type="FunFam" id="3.40.120.10:FF:000002">
    <property type="entry name" value="Phosphoglucosamine mutase"/>
    <property type="match status" value="1"/>
</dbReference>
<dbReference type="Gene3D" id="3.40.120.10">
    <property type="entry name" value="Alpha-D-Glucose-1,6-Bisphosphate, subunit A, domain 3"/>
    <property type="match status" value="3"/>
</dbReference>
<dbReference type="Gene3D" id="3.30.310.50">
    <property type="entry name" value="Alpha-D-phosphohexomutase, C-terminal domain"/>
    <property type="match status" value="1"/>
</dbReference>
<dbReference type="HAMAP" id="MF_01554_B">
    <property type="entry name" value="GlmM_B"/>
    <property type="match status" value="1"/>
</dbReference>
<dbReference type="InterPro" id="IPR005844">
    <property type="entry name" value="A-D-PHexomutase_a/b/a-I"/>
</dbReference>
<dbReference type="InterPro" id="IPR016055">
    <property type="entry name" value="A-D-PHexomutase_a/b/a-I/II/III"/>
</dbReference>
<dbReference type="InterPro" id="IPR005845">
    <property type="entry name" value="A-D-PHexomutase_a/b/a-II"/>
</dbReference>
<dbReference type="InterPro" id="IPR005846">
    <property type="entry name" value="A-D-PHexomutase_a/b/a-III"/>
</dbReference>
<dbReference type="InterPro" id="IPR005843">
    <property type="entry name" value="A-D-PHexomutase_C"/>
</dbReference>
<dbReference type="InterPro" id="IPR036900">
    <property type="entry name" value="A-D-PHexomutase_C_sf"/>
</dbReference>
<dbReference type="InterPro" id="IPR016066">
    <property type="entry name" value="A-D-PHexomutase_CS"/>
</dbReference>
<dbReference type="InterPro" id="IPR005841">
    <property type="entry name" value="Alpha-D-phosphohexomutase_SF"/>
</dbReference>
<dbReference type="InterPro" id="IPR006352">
    <property type="entry name" value="GlmM_bact"/>
</dbReference>
<dbReference type="InterPro" id="IPR050060">
    <property type="entry name" value="Phosphoglucosamine_mutase"/>
</dbReference>
<dbReference type="NCBIfam" id="TIGR01455">
    <property type="entry name" value="glmM"/>
    <property type="match status" value="1"/>
</dbReference>
<dbReference type="PANTHER" id="PTHR42946:SF1">
    <property type="entry name" value="PHOSPHOGLUCOMUTASE (ALPHA-D-GLUCOSE-1,6-BISPHOSPHATE-DEPENDENT)"/>
    <property type="match status" value="1"/>
</dbReference>
<dbReference type="PANTHER" id="PTHR42946">
    <property type="entry name" value="PHOSPHOHEXOSE MUTASE"/>
    <property type="match status" value="1"/>
</dbReference>
<dbReference type="Pfam" id="PF02878">
    <property type="entry name" value="PGM_PMM_I"/>
    <property type="match status" value="1"/>
</dbReference>
<dbReference type="Pfam" id="PF02879">
    <property type="entry name" value="PGM_PMM_II"/>
    <property type="match status" value="1"/>
</dbReference>
<dbReference type="Pfam" id="PF02880">
    <property type="entry name" value="PGM_PMM_III"/>
    <property type="match status" value="1"/>
</dbReference>
<dbReference type="Pfam" id="PF00408">
    <property type="entry name" value="PGM_PMM_IV"/>
    <property type="match status" value="1"/>
</dbReference>
<dbReference type="PRINTS" id="PR00509">
    <property type="entry name" value="PGMPMM"/>
</dbReference>
<dbReference type="SUPFAM" id="SSF55957">
    <property type="entry name" value="Phosphoglucomutase, C-terminal domain"/>
    <property type="match status" value="1"/>
</dbReference>
<dbReference type="SUPFAM" id="SSF53738">
    <property type="entry name" value="Phosphoglucomutase, first 3 domains"/>
    <property type="match status" value="3"/>
</dbReference>
<dbReference type="PROSITE" id="PS00710">
    <property type="entry name" value="PGM_PMM"/>
    <property type="match status" value="1"/>
</dbReference>
<sequence length="450" mass="48124">MGKYFGTDGVRGEANLELTPELAFKLGRFGGYVLSQHETEAPKVFVGRDTRISGEMLESALVAGLLSVGIHVYKLGVLATPAVAYLVETEGASAGVMISASHNPALDNGIKFFGGDGFKLDDEKEAEIEALLDAEEDTLPRPSAEGLGILVDYPEGLRKYEGYLVSTGTPLDGMKVALDTANGAASTSARQIFADLGAQLTVIGETPDGLNINLNVGSTHPEALQEVVKESGSAIGLAFDGDSDRLIAVDENGDIVDGDKIMYIIGKYLSEKGQLAQNTIVTTVMSNLGFHKALNREGINKAVTAVGDRYVVEEMRKSGYNLGGEQSGHVILMDYNTTGDGQLSAVQLTKIMKETGKSLSELAAEVTIYPQKLVNIRVENVMKEKAMEVPAIKAIIEKMEEEMAGNGRILVRPSGTEPLLRVMAEAPTTEEVDYYVDTITDVVRAEIGID</sequence>
<evidence type="ECO:0000255" key="1">
    <source>
        <dbReference type="HAMAP-Rule" id="MF_01554"/>
    </source>
</evidence>
<accession>C1CSI0</accession>
<reference key="1">
    <citation type="journal article" date="2010" name="Genome Biol.">
        <title>Structure and dynamics of the pan-genome of Streptococcus pneumoniae and closely related species.</title>
        <authorList>
            <person name="Donati C."/>
            <person name="Hiller N.L."/>
            <person name="Tettelin H."/>
            <person name="Muzzi A."/>
            <person name="Croucher N.J."/>
            <person name="Angiuoli S.V."/>
            <person name="Oggioni M."/>
            <person name="Dunning Hotopp J.C."/>
            <person name="Hu F.Z."/>
            <person name="Riley D.R."/>
            <person name="Covacci A."/>
            <person name="Mitchell T.J."/>
            <person name="Bentley S.D."/>
            <person name="Kilian M."/>
            <person name="Ehrlich G.D."/>
            <person name="Rappuoli R."/>
            <person name="Moxon E.R."/>
            <person name="Masignani V."/>
        </authorList>
    </citation>
    <scope>NUCLEOTIDE SEQUENCE [LARGE SCALE GENOMIC DNA]</scope>
    <source>
        <strain>Taiwan19F-14</strain>
    </source>
</reference>
<name>GLMM_STRZT</name>
<feature type="chain" id="PRO_1000185389" description="Phosphoglucosamine mutase">
    <location>
        <begin position="1"/>
        <end position="450"/>
    </location>
</feature>
<feature type="active site" description="Phosphoserine intermediate" evidence="1">
    <location>
        <position position="101"/>
    </location>
</feature>
<feature type="binding site" description="via phosphate group" evidence="1">
    <location>
        <position position="101"/>
    </location>
    <ligand>
        <name>Mg(2+)</name>
        <dbReference type="ChEBI" id="CHEBI:18420"/>
    </ligand>
</feature>
<feature type="binding site" evidence="1">
    <location>
        <position position="240"/>
    </location>
    <ligand>
        <name>Mg(2+)</name>
        <dbReference type="ChEBI" id="CHEBI:18420"/>
    </ligand>
</feature>
<feature type="binding site" evidence="1">
    <location>
        <position position="242"/>
    </location>
    <ligand>
        <name>Mg(2+)</name>
        <dbReference type="ChEBI" id="CHEBI:18420"/>
    </ligand>
</feature>
<feature type="binding site" evidence="1">
    <location>
        <position position="244"/>
    </location>
    <ligand>
        <name>Mg(2+)</name>
        <dbReference type="ChEBI" id="CHEBI:18420"/>
    </ligand>
</feature>
<feature type="modified residue" description="Phosphoserine" evidence="1">
    <location>
        <position position="101"/>
    </location>
</feature>
<gene>
    <name evidence="1" type="primary">glmM</name>
    <name type="ordered locus">SPT_1500</name>
</gene>
<keyword id="KW-0413">Isomerase</keyword>
<keyword id="KW-0460">Magnesium</keyword>
<keyword id="KW-0479">Metal-binding</keyword>
<keyword id="KW-0597">Phosphoprotein</keyword>
<comment type="function">
    <text evidence="1">Catalyzes the conversion of glucosamine-6-phosphate to glucosamine-1-phosphate.</text>
</comment>
<comment type="catalytic activity">
    <reaction evidence="1">
        <text>alpha-D-glucosamine 1-phosphate = D-glucosamine 6-phosphate</text>
        <dbReference type="Rhea" id="RHEA:23424"/>
        <dbReference type="ChEBI" id="CHEBI:58516"/>
        <dbReference type="ChEBI" id="CHEBI:58725"/>
        <dbReference type="EC" id="5.4.2.10"/>
    </reaction>
</comment>
<comment type="cofactor">
    <cofactor evidence="1">
        <name>Mg(2+)</name>
        <dbReference type="ChEBI" id="CHEBI:18420"/>
    </cofactor>
    <text evidence="1">Binds 1 Mg(2+) ion per subunit.</text>
</comment>
<comment type="PTM">
    <text evidence="1">Activated by phosphorylation.</text>
</comment>
<comment type="similarity">
    <text evidence="1">Belongs to the phosphohexose mutase family.</text>
</comment>
<proteinExistence type="inferred from homology"/>
<organism>
    <name type="scientific">Streptococcus pneumoniae (strain Taiwan19F-14)</name>
    <dbReference type="NCBI Taxonomy" id="487213"/>
    <lineage>
        <taxon>Bacteria</taxon>
        <taxon>Bacillati</taxon>
        <taxon>Bacillota</taxon>
        <taxon>Bacilli</taxon>
        <taxon>Lactobacillales</taxon>
        <taxon>Streptococcaceae</taxon>
        <taxon>Streptococcus</taxon>
    </lineage>
</organism>